<organism>
    <name type="scientific">Burkholderia ambifaria (strain ATCC BAA-244 / DSM 16087 / CCUG 44356 / LMG 19182 / AMMD)</name>
    <name type="common">Burkholderia cepacia (strain AMMD)</name>
    <dbReference type="NCBI Taxonomy" id="339670"/>
    <lineage>
        <taxon>Bacteria</taxon>
        <taxon>Pseudomonadati</taxon>
        <taxon>Pseudomonadota</taxon>
        <taxon>Betaproteobacteria</taxon>
        <taxon>Burkholderiales</taxon>
        <taxon>Burkholderiaceae</taxon>
        <taxon>Burkholderia</taxon>
        <taxon>Burkholderia cepacia complex</taxon>
    </lineage>
</organism>
<evidence type="ECO:0000255" key="1">
    <source>
        <dbReference type="HAMAP-Rule" id="MF_01333"/>
    </source>
</evidence>
<evidence type="ECO:0000305" key="2"/>
<name>RL5_BURCM</name>
<comment type="function">
    <text evidence="1">This is one of the proteins that bind and probably mediate the attachment of the 5S RNA into the large ribosomal subunit, where it forms part of the central protuberance. In the 70S ribosome it contacts protein S13 of the 30S subunit (bridge B1b), connecting the 2 subunits; this bridge is implicated in subunit movement. Contacts the P site tRNA; the 5S rRNA and some of its associated proteins might help stabilize positioning of ribosome-bound tRNAs.</text>
</comment>
<comment type="subunit">
    <text evidence="1">Part of the 50S ribosomal subunit; part of the 5S rRNA/L5/L18/L25 subcomplex. Contacts the 5S rRNA and the P site tRNA. Forms a bridge to the 30S subunit in the 70S ribosome.</text>
</comment>
<comment type="similarity">
    <text evidence="1">Belongs to the universal ribosomal protein uL5 family.</text>
</comment>
<reference key="1">
    <citation type="submission" date="2006-08" db="EMBL/GenBank/DDBJ databases">
        <title>Complete sequence of chromosome 1 of Burkholderia cepacia AMMD.</title>
        <authorList>
            <person name="Copeland A."/>
            <person name="Lucas S."/>
            <person name="Lapidus A."/>
            <person name="Barry K."/>
            <person name="Detter J.C."/>
            <person name="Glavina del Rio T."/>
            <person name="Hammon N."/>
            <person name="Israni S."/>
            <person name="Pitluck S."/>
            <person name="Bruce D."/>
            <person name="Chain P."/>
            <person name="Malfatti S."/>
            <person name="Shin M."/>
            <person name="Vergez L."/>
            <person name="Schmutz J."/>
            <person name="Larimer F."/>
            <person name="Land M."/>
            <person name="Hauser L."/>
            <person name="Kyrpides N."/>
            <person name="Kim E."/>
            <person name="Parke J."/>
            <person name="Coenye T."/>
            <person name="Konstantinidis K."/>
            <person name="Ramette A."/>
            <person name="Tiedje J."/>
            <person name="Richardson P."/>
        </authorList>
    </citation>
    <scope>NUCLEOTIDE SEQUENCE [LARGE SCALE GENOMIC DNA]</scope>
    <source>
        <strain>ATCC BAA-244 / DSM 16087 / CCUG 44356 / LMG 19182 / AMMD</strain>
    </source>
</reference>
<dbReference type="EMBL" id="CP000440">
    <property type="protein sequence ID" value="ABI85839.1"/>
    <property type="molecule type" value="Genomic_DNA"/>
</dbReference>
<dbReference type="RefSeq" id="WP_006482882.1">
    <property type="nucleotide sequence ID" value="NZ_CP009798.1"/>
</dbReference>
<dbReference type="SMR" id="Q0BJ34"/>
<dbReference type="GeneID" id="98107148"/>
<dbReference type="KEGG" id="bam:Bamb_0279"/>
<dbReference type="PATRIC" id="fig|339670.21.peg.1341"/>
<dbReference type="eggNOG" id="COG0094">
    <property type="taxonomic scope" value="Bacteria"/>
</dbReference>
<dbReference type="Proteomes" id="UP000000662">
    <property type="component" value="Chromosome 1"/>
</dbReference>
<dbReference type="GO" id="GO:1990904">
    <property type="term" value="C:ribonucleoprotein complex"/>
    <property type="evidence" value="ECO:0007669"/>
    <property type="project" value="UniProtKB-KW"/>
</dbReference>
<dbReference type="GO" id="GO:0005840">
    <property type="term" value="C:ribosome"/>
    <property type="evidence" value="ECO:0007669"/>
    <property type="project" value="UniProtKB-KW"/>
</dbReference>
<dbReference type="GO" id="GO:0019843">
    <property type="term" value="F:rRNA binding"/>
    <property type="evidence" value="ECO:0007669"/>
    <property type="project" value="UniProtKB-UniRule"/>
</dbReference>
<dbReference type="GO" id="GO:0003735">
    <property type="term" value="F:structural constituent of ribosome"/>
    <property type="evidence" value="ECO:0007669"/>
    <property type="project" value="InterPro"/>
</dbReference>
<dbReference type="GO" id="GO:0000049">
    <property type="term" value="F:tRNA binding"/>
    <property type="evidence" value="ECO:0007669"/>
    <property type="project" value="UniProtKB-UniRule"/>
</dbReference>
<dbReference type="GO" id="GO:0006412">
    <property type="term" value="P:translation"/>
    <property type="evidence" value="ECO:0007669"/>
    <property type="project" value="UniProtKB-UniRule"/>
</dbReference>
<dbReference type="FunFam" id="3.30.1440.10:FF:000001">
    <property type="entry name" value="50S ribosomal protein L5"/>
    <property type="match status" value="1"/>
</dbReference>
<dbReference type="Gene3D" id="3.30.1440.10">
    <property type="match status" value="1"/>
</dbReference>
<dbReference type="HAMAP" id="MF_01333_B">
    <property type="entry name" value="Ribosomal_uL5_B"/>
    <property type="match status" value="1"/>
</dbReference>
<dbReference type="InterPro" id="IPR002132">
    <property type="entry name" value="Ribosomal_uL5"/>
</dbReference>
<dbReference type="InterPro" id="IPR020930">
    <property type="entry name" value="Ribosomal_uL5_bac-type"/>
</dbReference>
<dbReference type="InterPro" id="IPR031309">
    <property type="entry name" value="Ribosomal_uL5_C"/>
</dbReference>
<dbReference type="InterPro" id="IPR020929">
    <property type="entry name" value="Ribosomal_uL5_CS"/>
</dbReference>
<dbReference type="InterPro" id="IPR022803">
    <property type="entry name" value="Ribosomal_uL5_dom_sf"/>
</dbReference>
<dbReference type="InterPro" id="IPR031310">
    <property type="entry name" value="Ribosomal_uL5_N"/>
</dbReference>
<dbReference type="NCBIfam" id="NF000585">
    <property type="entry name" value="PRK00010.1"/>
    <property type="match status" value="1"/>
</dbReference>
<dbReference type="PANTHER" id="PTHR11994">
    <property type="entry name" value="60S RIBOSOMAL PROTEIN L11-RELATED"/>
    <property type="match status" value="1"/>
</dbReference>
<dbReference type="Pfam" id="PF00281">
    <property type="entry name" value="Ribosomal_L5"/>
    <property type="match status" value="1"/>
</dbReference>
<dbReference type="Pfam" id="PF00673">
    <property type="entry name" value="Ribosomal_L5_C"/>
    <property type="match status" value="1"/>
</dbReference>
<dbReference type="PIRSF" id="PIRSF002161">
    <property type="entry name" value="Ribosomal_L5"/>
    <property type="match status" value="1"/>
</dbReference>
<dbReference type="SUPFAM" id="SSF55282">
    <property type="entry name" value="RL5-like"/>
    <property type="match status" value="1"/>
</dbReference>
<dbReference type="PROSITE" id="PS00358">
    <property type="entry name" value="RIBOSOMAL_L5"/>
    <property type="match status" value="1"/>
</dbReference>
<feature type="chain" id="PRO_1000052703" description="Large ribosomal subunit protein uL5">
    <location>
        <begin position="1"/>
        <end position="179"/>
    </location>
</feature>
<accession>Q0BJ34</accession>
<proteinExistence type="inferred from homology"/>
<protein>
    <recommendedName>
        <fullName evidence="1">Large ribosomal subunit protein uL5</fullName>
    </recommendedName>
    <alternativeName>
        <fullName evidence="2">50S ribosomal protein L5</fullName>
    </alternativeName>
</protein>
<keyword id="KW-0687">Ribonucleoprotein</keyword>
<keyword id="KW-0689">Ribosomal protein</keyword>
<keyword id="KW-0694">RNA-binding</keyword>
<keyword id="KW-0699">rRNA-binding</keyword>
<keyword id="KW-0820">tRNA-binding</keyword>
<sequence length="179" mass="20041">MARFQEFYKEKVVPGLIEKFGYKSVMEVPRITKITLNMGLGEAIADKKIIENAVGDLTKIAGQKPVVTKARKAIAGFKIRQGYPIGAMVTLRGRAMYEFLDRFVTVALPRVRDFRGVSGRAFDGRGNYNIGVKEQIIFPEIDYDKIDALRGLNISITTTAKTDDEAKALLASFKFPFRN</sequence>
<gene>
    <name evidence="1" type="primary">rplE</name>
    <name type="ordered locus">Bamb_0279</name>
</gene>